<protein>
    <recommendedName>
        <fullName evidence="1">Phosphate acyltransferase</fullName>
        <ecNumber evidence="1">2.3.1.274</ecNumber>
    </recommendedName>
    <alternativeName>
        <fullName evidence="1">Acyl-ACP phosphotransacylase</fullName>
    </alternativeName>
    <alternativeName>
        <fullName evidence="1">Acyl-[acyl-carrier-protein]--phosphate acyltransferase</fullName>
    </alternativeName>
    <alternativeName>
        <fullName evidence="1">Phosphate-acyl-ACP acyltransferase</fullName>
    </alternativeName>
</protein>
<accession>B6IMR6</accession>
<feature type="chain" id="PRO_1000089931" description="Phosphate acyltransferase">
    <location>
        <begin position="1"/>
        <end position="355"/>
    </location>
</feature>
<comment type="function">
    <text evidence="1">Catalyzes the reversible formation of acyl-phosphate (acyl-PO(4)) from acyl-[acyl-carrier-protein] (acyl-ACP). This enzyme utilizes acyl-ACP as fatty acyl donor, but not acyl-CoA.</text>
</comment>
<comment type="catalytic activity">
    <reaction evidence="1">
        <text>a fatty acyl-[ACP] + phosphate = an acyl phosphate + holo-[ACP]</text>
        <dbReference type="Rhea" id="RHEA:42292"/>
        <dbReference type="Rhea" id="RHEA-COMP:9685"/>
        <dbReference type="Rhea" id="RHEA-COMP:14125"/>
        <dbReference type="ChEBI" id="CHEBI:43474"/>
        <dbReference type="ChEBI" id="CHEBI:59918"/>
        <dbReference type="ChEBI" id="CHEBI:64479"/>
        <dbReference type="ChEBI" id="CHEBI:138651"/>
        <dbReference type="EC" id="2.3.1.274"/>
    </reaction>
</comment>
<comment type="pathway">
    <text evidence="1">Lipid metabolism; phospholipid metabolism.</text>
</comment>
<comment type="subunit">
    <text evidence="1">Homodimer. Probably interacts with PlsY.</text>
</comment>
<comment type="subcellular location">
    <subcellularLocation>
        <location evidence="1">Cytoplasm</location>
    </subcellularLocation>
    <text evidence="1">Associated with the membrane possibly through PlsY.</text>
</comment>
<comment type="similarity">
    <text evidence="1">Belongs to the PlsX family.</text>
</comment>
<name>PLSX_RHOCS</name>
<organism>
    <name type="scientific">Rhodospirillum centenum (strain ATCC 51521 / SW)</name>
    <dbReference type="NCBI Taxonomy" id="414684"/>
    <lineage>
        <taxon>Bacteria</taxon>
        <taxon>Pseudomonadati</taxon>
        <taxon>Pseudomonadota</taxon>
        <taxon>Alphaproteobacteria</taxon>
        <taxon>Rhodospirillales</taxon>
        <taxon>Rhodospirillaceae</taxon>
        <taxon>Rhodospirillum</taxon>
    </lineage>
</organism>
<sequence>MSERFCIALDAMGGDHAPDMVVAGADIARERCPNVDYLFVGDEERIRPLLDKYPALAAVSTVRHTPDAVAGDAKPSVALRTGRNSSMRLAIDAVAAGDAACVVSAGNTGALMAMAKFVLKTLPGIDRPAIASFFPTLRGESVMLDLGANLECDADNLVQFAVMGTVFSRTVLGLLEPTVGLLNVGSEEQKGHGSIRQAASALRASALAKNFRGFVEGNDIAAGTVDVIVTDGFSGNIALKTAEGTAKLYAEFLKRTFKSSLLAKLGYLLAHGAFQKLRLRTDPRRYNGAMFLGLRGVCVKSHGGTDAVGFANAIGVASDLVVHGFNEKIRDELARLQAALEAAALSPESTEAAAV</sequence>
<dbReference type="EC" id="2.3.1.274" evidence="1"/>
<dbReference type="EMBL" id="CP000613">
    <property type="protein sequence ID" value="ACI98732.1"/>
    <property type="molecule type" value="Genomic_DNA"/>
</dbReference>
<dbReference type="RefSeq" id="WP_012566519.1">
    <property type="nucleotide sequence ID" value="NC_011420.2"/>
</dbReference>
<dbReference type="SMR" id="B6IMR6"/>
<dbReference type="STRING" id="414684.RC1_1328"/>
<dbReference type="KEGG" id="rce:RC1_1328"/>
<dbReference type="eggNOG" id="COG0416">
    <property type="taxonomic scope" value="Bacteria"/>
</dbReference>
<dbReference type="HOGENOM" id="CLU_039379_1_0_5"/>
<dbReference type="OrthoDB" id="9806408at2"/>
<dbReference type="UniPathway" id="UPA00085"/>
<dbReference type="Proteomes" id="UP000001591">
    <property type="component" value="Chromosome"/>
</dbReference>
<dbReference type="GO" id="GO:0005737">
    <property type="term" value="C:cytoplasm"/>
    <property type="evidence" value="ECO:0007669"/>
    <property type="project" value="UniProtKB-SubCell"/>
</dbReference>
<dbReference type="GO" id="GO:0043811">
    <property type="term" value="F:phosphate:acyl-[acyl carrier protein] acyltransferase activity"/>
    <property type="evidence" value="ECO:0007669"/>
    <property type="project" value="UniProtKB-UniRule"/>
</dbReference>
<dbReference type="GO" id="GO:0006633">
    <property type="term" value="P:fatty acid biosynthetic process"/>
    <property type="evidence" value="ECO:0007669"/>
    <property type="project" value="UniProtKB-UniRule"/>
</dbReference>
<dbReference type="GO" id="GO:0008654">
    <property type="term" value="P:phospholipid biosynthetic process"/>
    <property type="evidence" value="ECO:0007669"/>
    <property type="project" value="UniProtKB-KW"/>
</dbReference>
<dbReference type="Gene3D" id="3.40.718.10">
    <property type="entry name" value="Isopropylmalate Dehydrogenase"/>
    <property type="match status" value="1"/>
</dbReference>
<dbReference type="HAMAP" id="MF_00019">
    <property type="entry name" value="PlsX"/>
    <property type="match status" value="1"/>
</dbReference>
<dbReference type="InterPro" id="IPR003664">
    <property type="entry name" value="FA_synthesis"/>
</dbReference>
<dbReference type="InterPro" id="IPR012281">
    <property type="entry name" value="Phospholipid_synth_PlsX-like"/>
</dbReference>
<dbReference type="NCBIfam" id="TIGR00182">
    <property type="entry name" value="plsX"/>
    <property type="match status" value="1"/>
</dbReference>
<dbReference type="PANTHER" id="PTHR30100">
    <property type="entry name" value="FATTY ACID/PHOSPHOLIPID SYNTHESIS PROTEIN PLSX"/>
    <property type="match status" value="1"/>
</dbReference>
<dbReference type="PANTHER" id="PTHR30100:SF1">
    <property type="entry name" value="PHOSPHATE ACYLTRANSFERASE"/>
    <property type="match status" value="1"/>
</dbReference>
<dbReference type="Pfam" id="PF02504">
    <property type="entry name" value="FA_synthesis"/>
    <property type="match status" value="1"/>
</dbReference>
<dbReference type="PIRSF" id="PIRSF002465">
    <property type="entry name" value="Phsphlp_syn_PlsX"/>
    <property type="match status" value="1"/>
</dbReference>
<dbReference type="SUPFAM" id="SSF53659">
    <property type="entry name" value="Isocitrate/Isopropylmalate dehydrogenase-like"/>
    <property type="match status" value="1"/>
</dbReference>
<gene>
    <name evidence="1" type="primary">plsX</name>
    <name type="ordered locus">RC1_1328</name>
</gene>
<reference key="1">
    <citation type="submission" date="2007-03" db="EMBL/GenBank/DDBJ databases">
        <title>Genome sequence of Rhodospirillum centenum.</title>
        <authorList>
            <person name="Touchman J.W."/>
            <person name="Bauer C."/>
            <person name="Blankenship R.E."/>
        </authorList>
    </citation>
    <scope>NUCLEOTIDE SEQUENCE [LARGE SCALE GENOMIC DNA]</scope>
    <source>
        <strain>ATCC 51521 / SW</strain>
    </source>
</reference>
<evidence type="ECO:0000255" key="1">
    <source>
        <dbReference type="HAMAP-Rule" id="MF_00019"/>
    </source>
</evidence>
<proteinExistence type="inferred from homology"/>
<keyword id="KW-0963">Cytoplasm</keyword>
<keyword id="KW-0444">Lipid biosynthesis</keyword>
<keyword id="KW-0443">Lipid metabolism</keyword>
<keyword id="KW-0594">Phospholipid biosynthesis</keyword>
<keyword id="KW-1208">Phospholipid metabolism</keyword>
<keyword id="KW-1185">Reference proteome</keyword>
<keyword id="KW-0808">Transferase</keyword>